<protein>
    <recommendedName>
        <fullName>Calumenin</fullName>
    </recommendedName>
</protein>
<gene>
    <name type="primary">CALU</name>
</gene>
<name>CALU_BOVIN</name>
<sequence>MDLRQFLMCLSLCTAFALSKPTEKKDRVHHEPQLSDKVHNDAQSFDYDHDAFLGAEEAKTFDQLTPEESKERLGMIVDKIDADKDGFVTEGELKSWIKHAQKKYIYDNVENQWQEFDLNQDGLISWDEYRNVTYGTYLDDPDPDDGFNYKQMMVRDERRFKMADKDGDLIATKEEFTAFLHPEEYDYMKDIVVQEPMEDIDKNADGFIDLEEYIGDMYSHDGNADEPEWVKTEREQFVEFRDKNRDGKMDKEETKDWILPSDYDHAEAEARHLVYESDQNKDGKLTKEEIVDKYDLFVGSQATDFGEALVRHDEF</sequence>
<proteinExistence type="evidence at transcript level"/>
<reference key="1">
    <citation type="submission" date="2005-08" db="EMBL/GenBank/DDBJ databases">
        <authorList>
            <consortium name="NIH - Mammalian Gene Collection (MGC) project"/>
        </authorList>
    </citation>
    <scope>NUCLEOTIDE SEQUENCE [LARGE SCALE MRNA]</scope>
    <source>
        <strain>Crossbred X Angus</strain>
        <tissue>Ileum</tissue>
    </source>
</reference>
<dbReference type="EMBL" id="BC102361">
    <property type="protein sequence ID" value="AAI02362.1"/>
    <property type="molecule type" value="mRNA"/>
</dbReference>
<dbReference type="RefSeq" id="NP_001029837.1">
    <property type="nucleotide sequence ID" value="NM_001034665.2"/>
</dbReference>
<dbReference type="FunCoup" id="Q3T0K1">
    <property type="interactions" value="493"/>
</dbReference>
<dbReference type="STRING" id="9913.ENSBTAP00000068970"/>
<dbReference type="GlyCosmos" id="Q3T0K1">
    <property type="glycosylation" value="1 site, No reported glycans"/>
</dbReference>
<dbReference type="GlyGen" id="Q3T0K1">
    <property type="glycosylation" value="1 site"/>
</dbReference>
<dbReference type="PaxDb" id="9913-ENSBTAP00000021909"/>
<dbReference type="PeptideAtlas" id="Q3T0K1"/>
<dbReference type="GeneID" id="539218"/>
<dbReference type="KEGG" id="bta:539218"/>
<dbReference type="CTD" id="813"/>
<dbReference type="eggNOG" id="KOG4223">
    <property type="taxonomic scope" value="Eukaryota"/>
</dbReference>
<dbReference type="InParanoid" id="Q3T0K1"/>
<dbReference type="OrthoDB" id="293868at2759"/>
<dbReference type="Proteomes" id="UP000009136">
    <property type="component" value="Unplaced"/>
</dbReference>
<dbReference type="GO" id="GO:0005783">
    <property type="term" value="C:endoplasmic reticulum"/>
    <property type="evidence" value="ECO:0000318"/>
    <property type="project" value="GO_Central"/>
</dbReference>
<dbReference type="GO" id="GO:0005789">
    <property type="term" value="C:endoplasmic reticulum membrane"/>
    <property type="evidence" value="ECO:0000250"/>
    <property type="project" value="UniProtKB"/>
</dbReference>
<dbReference type="GO" id="GO:0005576">
    <property type="term" value="C:extracellular region"/>
    <property type="evidence" value="ECO:0000250"/>
    <property type="project" value="UniProtKB"/>
</dbReference>
<dbReference type="GO" id="GO:0005794">
    <property type="term" value="C:Golgi apparatus"/>
    <property type="evidence" value="ECO:0000250"/>
    <property type="project" value="UniProtKB"/>
</dbReference>
<dbReference type="GO" id="GO:0042470">
    <property type="term" value="C:melanosome"/>
    <property type="evidence" value="ECO:0007669"/>
    <property type="project" value="UniProtKB-SubCell"/>
</dbReference>
<dbReference type="GO" id="GO:0033018">
    <property type="term" value="C:sarcoplasmic reticulum lumen"/>
    <property type="evidence" value="ECO:0007669"/>
    <property type="project" value="UniProtKB-SubCell"/>
</dbReference>
<dbReference type="GO" id="GO:0005509">
    <property type="term" value="F:calcium ion binding"/>
    <property type="evidence" value="ECO:0000318"/>
    <property type="project" value="GO_Central"/>
</dbReference>
<dbReference type="CDD" id="cd16228">
    <property type="entry name" value="EFh_CREC_Calumenin"/>
    <property type="match status" value="1"/>
</dbReference>
<dbReference type="FunFam" id="1.10.238.10:FF:000090">
    <property type="entry name" value="calumenin isoform X2"/>
    <property type="match status" value="1"/>
</dbReference>
<dbReference type="FunFam" id="1.10.238.10:FF:000109">
    <property type="entry name" value="calumenin isoform X2"/>
    <property type="match status" value="1"/>
</dbReference>
<dbReference type="FunFam" id="1.10.238.10:FF:000110">
    <property type="entry name" value="calumenin isoform X2"/>
    <property type="match status" value="1"/>
</dbReference>
<dbReference type="Gene3D" id="1.10.238.10">
    <property type="entry name" value="EF-hand"/>
    <property type="match status" value="3"/>
</dbReference>
<dbReference type="InterPro" id="IPR011992">
    <property type="entry name" value="EF-hand-dom_pair"/>
</dbReference>
<dbReference type="InterPro" id="IPR018247">
    <property type="entry name" value="EF_Hand_1_Ca_BS"/>
</dbReference>
<dbReference type="InterPro" id="IPR002048">
    <property type="entry name" value="EF_hand_dom"/>
</dbReference>
<dbReference type="PANTHER" id="PTHR10827:SF88">
    <property type="entry name" value="CALUMENIN"/>
    <property type="match status" value="1"/>
</dbReference>
<dbReference type="PANTHER" id="PTHR10827">
    <property type="entry name" value="RETICULOCALBIN"/>
    <property type="match status" value="1"/>
</dbReference>
<dbReference type="Pfam" id="PF13202">
    <property type="entry name" value="EF-hand_5"/>
    <property type="match status" value="1"/>
</dbReference>
<dbReference type="Pfam" id="PF13499">
    <property type="entry name" value="EF-hand_7"/>
    <property type="match status" value="1"/>
</dbReference>
<dbReference type="Pfam" id="PF13833">
    <property type="entry name" value="EF-hand_8"/>
    <property type="match status" value="1"/>
</dbReference>
<dbReference type="SMART" id="SM00054">
    <property type="entry name" value="EFh"/>
    <property type="match status" value="5"/>
</dbReference>
<dbReference type="SUPFAM" id="SSF47473">
    <property type="entry name" value="EF-hand"/>
    <property type="match status" value="2"/>
</dbReference>
<dbReference type="PROSITE" id="PS00018">
    <property type="entry name" value="EF_HAND_1"/>
    <property type="match status" value="4"/>
</dbReference>
<dbReference type="PROSITE" id="PS50222">
    <property type="entry name" value="EF_HAND_2"/>
    <property type="match status" value="6"/>
</dbReference>
<feature type="signal peptide" evidence="1">
    <location>
        <begin position="1"/>
        <end position="19"/>
    </location>
</feature>
<feature type="chain" id="PRO_0000240134" description="Calumenin">
    <location>
        <begin position="20"/>
        <end position="315"/>
    </location>
</feature>
<feature type="domain" description="EF-hand 1" evidence="5">
    <location>
        <begin position="68"/>
        <end position="103"/>
    </location>
</feature>
<feature type="domain" description="EF-hand 2" evidence="5">
    <location>
        <begin position="104"/>
        <end position="139"/>
    </location>
</feature>
<feature type="domain" description="EF-hand 3" evidence="5">
    <location>
        <begin position="151"/>
        <end position="186"/>
    </location>
</feature>
<feature type="domain" description="EF-hand 4" evidence="5">
    <location>
        <begin position="188"/>
        <end position="223"/>
    </location>
</feature>
<feature type="domain" description="EF-hand 5" evidence="5">
    <location>
        <begin position="229"/>
        <end position="264"/>
    </location>
</feature>
<feature type="domain" description="EF-hand 6" evidence="5">
    <location>
        <begin position="265"/>
        <end position="300"/>
    </location>
</feature>
<feature type="short sequence motif" description="Prevents secretion from ER">
    <location>
        <begin position="312"/>
        <end position="315"/>
    </location>
</feature>
<feature type="binding site" evidence="5">
    <location>
        <position position="81"/>
    </location>
    <ligand>
        <name>Ca(2+)</name>
        <dbReference type="ChEBI" id="CHEBI:29108"/>
        <label>1</label>
    </ligand>
</feature>
<feature type="binding site" evidence="5">
    <location>
        <position position="83"/>
    </location>
    <ligand>
        <name>Ca(2+)</name>
        <dbReference type="ChEBI" id="CHEBI:29108"/>
        <label>1</label>
    </ligand>
</feature>
<feature type="binding site" evidence="5">
    <location>
        <position position="85"/>
    </location>
    <ligand>
        <name>Ca(2+)</name>
        <dbReference type="ChEBI" id="CHEBI:29108"/>
        <label>1</label>
    </ligand>
</feature>
<feature type="binding site" evidence="5">
    <location>
        <position position="92"/>
    </location>
    <ligand>
        <name>Ca(2+)</name>
        <dbReference type="ChEBI" id="CHEBI:29108"/>
        <label>1</label>
    </ligand>
</feature>
<feature type="binding site" evidence="5">
    <location>
        <position position="117"/>
    </location>
    <ligand>
        <name>Ca(2+)</name>
        <dbReference type="ChEBI" id="CHEBI:29108"/>
        <label>2</label>
    </ligand>
</feature>
<feature type="binding site" evidence="5">
    <location>
        <position position="119"/>
    </location>
    <ligand>
        <name>Ca(2+)</name>
        <dbReference type="ChEBI" id="CHEBI:29108"/>
        <label>2</label>
    </ligand>
</feature>
<feature type="binding site" evidence="5">
    <location>
        <position position="121"/>
    </location>
    <ligand>
        <name>Ca(2+)</name>
        <dbReference type="ChEBI" id="CHEBI:29108"/>
        <label>2</label>
    </ligand>
</feature>
<feature type="binding site" evidence="5">
    <location>
        <position position="128"/>
    </location>
    <ligand>
        <name>Ca(2+)</name>
        <dbReference type="ChEBI" id="CHEBI:29108"/>
        <label>2</label>
    </ligand>
</feature>
<feature type="binding site" evidence="6">
    <location>
        <position position="164"/>
    </location>
    <ligand>
        <name>Ca(2+)</name>
        <dbReference type="ChEBI" id="CHEBI:29108"/>
        <label>3</label>
    </ligand>
</feature>
<feature type="binding site" evidence="6">
    <location>
        <position position="166"/>
    </location>
    <ligand>
        <name>Ca(2+)</name>
        <dbReference type="ChEBI" id="CHEBI:29108"/>
        <label>3</label>
    </ligand>
</feature>
<feature type="binding site" evidence="6">
    <location>
        <position position="168"/>
    </location>
    <ligand>
        <name>Ca(2+)</name>
        <dbReference type="ChEBI" id="CHEBI:29108"/>
        <label>3</label>
    </ligand>
</feature>
<feature type="binding site" evidence="6">
    <location>
        <position position="175"/>
    </location>
    <ligand>
        <name>Ca(2+)</name>
        <dbReference type="ChEBI" id="CHEBI:29108"/>
        <label>3</label>
    </ligand>
</feature>
<feature type="binding site" evidence="5">
    <location>
        <position position="201"/>
    </location>
    <ligand>
        <name>Ca(2+)</name>
        <dbReference type="ChEBI" id="CHEBI:29108"/>
        <label>4</label>
    </ligand>
</feature>
<feature type="binding site" evidence="5">
    <location>
        <position position="203"/>
    </location>
    <ligand>
        <name>Ca(2+)</name>
        <dbReference type="ChEBI" id="CHEBI:29108"/>
        <label>4</label>
    </ligand>
</feature>
<feature type="binding site" evidence="5">
    <location>
        <position position="205"/>
    </location>
    <ligand>
        <name>Ca(2+)</name>
        <dbReference type="ChEBI" id="CHEBI:29108"/>
        <label>4</label>
    </ligand>
</feature>
<feature type="binding site" evidence="5">
    <location>
        <position position="212"/>
    </location>
    <ligand>
        <name>Ca(2+)</name>
        <dbReference type="ChEBI" id="CHEBI:29108"/>
        <label>4</label>
    </ligand>
</feature>
<feature type="binding site" evidence="6">
    <location>
        <position position="242"/>
    </location>
    <ligand>
        <name>Ca(2+)</name>
        <dbReference type="ChEBI" id="CHEBI:29108"/>
        <label>5</label>
    </ligand>
</feature>
<feature type="binding site" evidence="6">
    <location>
        <position position="244"/>
    </location>
    <ligand>
        <name>Ca(2+)</name>
        <dbReference type="ChEBI" id="CHEBI:29108"/>
        <label>5</label>
    </ligand>
</feature>
<feature type="binding site" evidence="6">
    <location>
        <position position="246"/>
    </location>
    <ligand>
        <name>Ca(2+)</name>
        <dbReference type="ChEBI" id="CHEBI:29108"/>
        <label>5</label>
    </ligand>
</feature>
<feature type="binding site" evidence="6">
    <location>
        <position position="248"/>
    </location>
    <ligand>
        <name>Ca(2+)</name>
        <dbReference type="ChEBI" id="CHEBI:29108"/>
        <label>5</label>
    </ligand>
</feature>
<feature type="binding site" evidence="6">
    <location>
        <position position="253"/>
    </location>
    <ligand>
        <name>Ca(2+)</name>
        <dbReference type="ChEBI" id="CHEBI:29108"/>
        <label>5</label>
    </ligand>
</feature>
<feature type="binding site" evidence="5">
    <location>
        <position position="278"/>
    </location>
    <ligand>
        <name>Ca(2+)</name>
        <dbReference type="ChEBI" id="CHEBI:29108"/>
        <label>6</label>
    </ligand>
</feature>
<feature type="binding site" evidence="5">
    <location>
        <position position="280"/>
    </location>
    <ligand>
        <name>Ca(2+)</name>
        <dbReference type="ChEBI" id="CHEBI:29108"/>
        <label>6</label>
    </ligand>
</feature>
<feature type="binding site" evidence="5">
    <location>
        <position position="282"/>
    </location>
    <ligand>
        <name>Ca(2+)</name>
        <dbReference type="ChEBI" id="CHEBI:29108"/>
        <label>6</label>
    </ligand>
</feature>
<feature type="binding site" evidence="5">
    <location>
        <position position="284"/>
    </location>
    <ligand>
        <name>Ca(2+)</name>
        <dbReference type="ChEBI" id="CHEBI:29108"/>
        <label>6</label>
    </ligand>
</feature>
<feature type="binding site" evidence="5">
    <location>
        <position position="289"/>
    </location>
    <ligand>
        <name>Ca(2+)</name>
        <dbReference type="ChEBI" id="CHEBI:29108"/>
        <label>6</label>
    </ligand>
</feature>
<feature type="modified residue" description="Phosphoserine" evidence="3">
    <location>
        <position position="44"/>
    </location>
</feature>
<feature type="modified residue" description="Phosphotyrosine" evidence="3">
    <location>
        <position position="47"/>
    </location>
</feature>
<feature type="modified residue" description="Phosphothreonine" evidence="3">
    <location>
        <position position="65"/>
    </location>
</feature>
<feature type="modified residue" description="Phosphoserine" evidence="3">
    <location>
        <position position="69"/>
    </location>
</feature>
<feature type="modified residue" description="N6-acetyllysine" evidence="2">
    <location>
        <position position="165"/>
    </location>
</feature>
<feature type="modified residue" description="Phosphothreonine" evidence="3">
    <location>
        <position position="254"/>
    </location>
</feature>
<feature type="modified residue" description="Phosphoserine" evidence="3">
    <location>
        <position position="261"/>
    </location>
</feature>
<feature type="modified residue" description="Phosphoserine" evidence="3">
    <location>
        <position position="277"/>
    </location>
</feature>
<feature type="glycosylation site" description="N-linked (GlcNAc...) asparagine" evidence="4">
    <location>
        <position position="131"/>
    </location>
</feature>
<organism>
    <name type="scientific">Bos taurus</name>
    <name type="common">Bovine</name>
    <dbReference type="NCBI Taxonomy" id="9913"/>
    <lineage>
        <taxon>Eukaryota</taxon>
        <taxon>Metazoa</taxon>
        <taxon>Chordata</taxon>
        <taxon>Craniata</taxon>
        <taxon>Vertebrata</taxon>
        <taxon>Euteleostomi</taxon>
        <taxon>Mammalia</taxon>
        <taxon>Eutheria</taxon>
        <taxon>Laurasiatheria</taxon>
        <taxon>Artiodactyla</taxon>
        <taxon>Ruminantia</taxon>
        <taxon>Pecora</taxon>
        <taxon>Bovidae</taxon>
        <taxon>Bovinae</taxon>
        <taxon>Bos</taxon>
    </lineage>
</organism>
<comment type="function">
    <text evidence="1">Involved in regulation of vitamin K-dependent carboxylation of multiple N-terminal glutamate residues. Seems to inhibit gamma-carboxylase GGCX. Binds 7 calcium ions with a low affinity (By similarity).</text>
</comment>
<comment type="subunit">
    <text evidence="1">Interacts with GGCX.</text>
</comment>
<comment type="subcellular location">
    <subcellularLocation>
        <location evidence="3">Endoplasmic reticulum membrane</location>
    </subcellularLocation>
    <subcellularLocation>
        <location evidence="3">Golgi apparatus</location>
    </subcellularLocation>
    <subcellularLocation>
        <location evidence="3">Secreted</location>
    </subcellularLocation>
    <subcellularLocation>
        <location evidence="3">Melanosome</location>
    </subcellularLocation>
    <subcellularLocation>
        <location evidence="3">Sarcoplasmic reticulum lumen</location>
    </subcellularLocation>
</comment>
<comment type="similarity">
    <text evidence="6">Belongs to the CREC family.</text>
</comment>
<keyword id="KW-0007">Acetylation</keyword>
<keyword id="KW-0106">Calcium</keyword>
<keyword id="KW-0256">Endoplasmic reticulum</keyword>
<keyword id="KW-0325">Glycoprotein</keyword>
<keyword id="KW-0333">Golgi apparatus</keyword>
<keyword id="KW-0472">Membrane</keyword>
<keyword id="KW-0479">Metal-binding</keyword>
<keyword id="KW-0597">Phosphoprotein</keyword>
<keyword id="KW-1185">Reference proteome</keyword>
<keyword id="KW-0677">Repeat</keyword>
<keyword id="KW-0703">Sarcoplasmic reticulum</keyword>
<keyword id="KW-0964">Secreted</keyword>
<keyword id="KW-0732">Signal</keyword>
<accession>Q3T0K1</accession>
<evidence type="ECO:0000250" key="1"/>
<evidence type="ECO:0000250" key="2">
    <source>
        <dbReference type="UniProtKB" id="O35887"/>
    </source>
</evidence>
<evidence type="ECO:0000250" key="3">
    <source>
        <dbReference type="UniProtKB" id="O43852"/>
    </source>
</evidence>
<evidence type="ECO:0000255" key="4"/>
<evidence type="ECO:0000255" key="5">
    <source>
        <dbReference type="PROSITE-ProRule" id="PRU00448"/>
    </source>
</evidence>
<evidence type="ECO:0000305" key="6"/>